<name>RL28_NITWN</name>
<dbReference type="EMBL" id="CP000115">
    <property type="protein sequence ID" value="ABA03673.1"/>
    <property type="molecule type" value="Genomic_DNA"/>
</dbReference>
<dbReference type="RefSeq" id="WP_011313737.1">
    <property type="nucleotide sequence ID" value="NC_007406.1"/>
</dbReference>
<dbReference type="SMR" id="Q3SVL8"/>
<dbReference type="STRING" id="323098.Nwi_0406"/>
<dbReference type="KEGG" id="nwi:Nwi_0406"/>
<dbReference type="eggNOG" id="COG0227">
    <property type="taxonomic scope" value="Bacteria"/>
</dbReference>
<dbReference type="HOGENOM" id="CLU_064548_4_2_5"/>
<dbReference type="OrthoDB" id="9805609at2"/>
<dbReference type="Proteomes" id="UP000002531">
    <property type="component" value="Chromosome"/>
</dbReference>
<dbReference type="GO" id="GO:0022625">
    <property type="term" value="C:cytosolic large ribosomal subunit"/>
    <property type="evidence" value="ECO:0007669"/>
    <property type="project" value="TreeGrafter"/>
</dbReference>
<dbReference type="GO" id="GO:0003735">
    <property type="term" value="F:structural constituent of ribosome"/>
    <property type="evidence" value="ECO:0007669"/>
    <property type="project" value="InterPro"/>
</dbReference>
<dbReference type="GO" id="GO:0006412">
    <property type="term" value="P:translation"/>
    <property type="evidence" value="ECO:0007669"/>
    <property type="project" value="UniProtKB-UniRule"/>
</dbReference>
<dbReference type="Gene3D" id="2.30.170.40">
    <property type="entry name" value="Ribosomal protein L28/L24"/>
    <property type="match status" value="1"/>
</dbReference>
<dbReference type="HAMAP" id="MF_00373">
    <property type="entry name" value="Ribosomal_bL28"/>
    <property type="match status" value="1"/>
</dbReference>
<dbReference type="InterPro" id="IPR026569">
    <property type="entry name" value="Ribosomal_bL28"/>
</dbReference>
<dbReference type="InterPro" id="IPR034704">
    <property type="entry name" value="Ribosomal_bL28/bL31-like_sf"/>
</dbReference>
<dbReference type="InterPro" id="IPR001383">
    <property type="entry name" value="Ribosomal_bL28_bact-type"/>
</dbReference>
<dbReference type="InterPro" id="IPR037147">
    <property type="entry name" value="Ribosomal_bL28_sf"/>
</dbReference>
<dbReference type="NCBIfam" id="TIGR00009">
    <property type="entry name" value="L28"/>
    <property type="match status" value="1"/>
</dbReference>
<dbReference type="PANTHER" id="PTHR13528">
    <property type="entry name" value="39S RIBOSOMAL PROTEIN L28, MITOCHONDRIAL"/>
    <property type="match status" value="1"/>
</dbReference>
<dbReference type="PANTHER" id="PTHR13528:SF2">
    <property type="entry name" value="LARGE RIBOSOMAL SUBUNIT PROTEIN BL28M"/>
    <property type="match status" value="1"/>
</dbReference>
<dbReference type="Pfam" id="PF00830">
    <property type="entry name" value="Ribosomal_L28"/>
    <property type="match status" value="1"/>
</dbReference>
<dbReference type="SUPFAM" id="SSF143800">
    <property type="entry name" value="L28p-like"/>
    <property type="match status" value="1"/>
</dbReference>
<protein>
    <recommendedName>
        <fullName evidence="1">Large ribosomal subunit protein bL28</fullName>
    </recommendedName>
    <alternativeName>
        <fullName evidence="2">50S ribosomal protein L28</fullName>
    </alternativeName>
</protein>
<sequence>MSRRCELTAKAPLVGHKVSHSNIKTKRRFLPNLVNVTFVSETLSSSVRFRVSTHALRSVDHRGGFDAFLLKARDSELSPKAIELKRQIQKKQAAKAG</sequence>
<accession>Q3SVL8</accession>
<organism>
    <name type="scientific">Nitrobacter winogradskyi (strain ATCC 25391 / DSM 10237 / CIP 104748 / NCIMB 11846 / Nb-255)</name>
    <dbReference type="NCBI Taxonomy" id="323098"/>
    <lineage>
        <taxon>Bacteria</taxon>
        <taxon>Pseudomonadati</taxon>
        <taxon>Pseudomonadota</taxon>
        <taxon>Alphaproteobacteria</taxon>
        <taxon>Hyphomicrobiales</taxon>
        <taxon>Nitrobacteraceae</taxon>
        <taxon>Nitrobacter</taxon>
    </lineage>
</organism>
<proteinExistence type="inferred from homology"/>
<gene>
    <name evidence="1" type="primary">rpmB</name>
    <name type="ordered locus">Nwi_0406</name>
</gene>
<evidence type="ECO:0000255" key="1">
    <source>
        <dbReference type="HAMAP-Rule" id="MF_00373"/>
    </source>
</evidence>
<evidence type="ECO:0000305" key="2"/>
<comment type="similarity">
    <text evidence="1">Belongs to the bacterial ribosomal protein bL28 family.</text>
</comment>
<feature type="chain" id="PRO_1000007289" description="Large ribosomal subunit protein bL28">
    <location>
        <begin position="1"/>
        <end position="97"/>
    </location>
</feature>
<reference key="1">
    <citation type="journal article" date="2006" name="Appl. Environ. Microbiol.">
        <title>Genome sequence of the chemolithoautotrophic nitrite-oxidizing bacterium Nitrobacter winogradskyi Nb-255.</title>
        <authorList>
            <person name="Starkenburg S.R."/>
            <person name="Chain P.S.G."/>
            <person name="Sayavedra-Soto L.A."/>
            <person name="Hauser L."/>
            <person name="Land M.L."/>
            <person name="Larimer F.W."/>
            <person name="Malfatti S.A."/>
            <person name="Klotz M.G."/>
            <person name="Bottomley P.J."/>
            <person name="Arp D.J."/>
            <person name="Hickey W.J."/>
        </authorList>
    </citation>
    <scope>NUCLEOTIDE SEQUENCE [LARGE SCALE GENOMIC DNA]</scope>
    <source>
        <strain>ATCC 25391 / DSM 10237 / CIP 104748 / NCIMB 11846 / Nb-255</strain>
    </source>
</reference>
<keyword id="KW-1185">Reference proteome</keyword>
<keyword id="KW-0687">Ribonucleoprotein</keyword>
<keyword id="KW-0689">Ribosomal protein</keyword>